<feature type="chain" id="PRO_0000231746" description="Imidazole glycerol phosphate synthase subunit HisH">
    <location>
        <begin position="1"/>
        <end position="209"/>
    </location>
</feature>
<feature type="domain" description="Glutamine amidotransferase type-1" evidence="1">
    <location>
        <begin position="3"/>
        <end position="209"/>
    </location>
</feature>
<feature type="active site" description="Nucleophile" evidence="1">
    <location>
        <position position="81"/>
    </location>
</feature>
<feature type="active site" evidence="1">
    <location>
        <position position="185"/>
    </location>
</feature>
<feature type="active site" evidence="1">
    <location>
        <position position="187"/>
    </location>
</feature>
<accession>Q46JZ5</accession>
<sequence>MTKIGLIDYGMGNLFSVQQAFKRFNQPLDIISDIKTLQSCDALILPGVGAFDPAMMNLRKTELVPSIIDWVNNGKPLFGICLGLQLLFEASDEGTSEGLGVIKGHIRRLPQEKDERIPHIGWSPIYKTNECPILENYPGSNWMYFVHSYSACPLEPKHTVAVTKFGKTDVSSMVWHKNTGACQFHPEKSGVAGQKIIFNWINWLKKNKF</sequence>
<name>HIS5_PROMT</name>
<organism>
    <name type="scientific">Prochlorococcus marinus (strain NATL2A)</name>
    <dbReference type="NCBI Taxonomy" id="59920"/>
    <lineage>
        <taxon>Bacteria</taxon>
        <taxon>Bacillati</taxon>
        <taxon>Cyanobacteriota</taxon>
        <taxon>Cyanophyceae</taxon>
        <taxon>Synechococcales</taxon>
        <taxon>Prochlorococcaceae</taxon>
        <taxon>Prochlorococcus</taxon>
    </lineage>
</organism>
<gene>
    <name evidence="1" type="primary">hisH</name>
    <name type="ordered locus">PMN2A_0692</name>
</gene>
<protein>
    <recommendedName>
        <fullName evidence="1">Imidazole glycerol phosphate synthase subunit HisH</fullName>
        <ecNumber evidence="1">4.3.2.10</ecNumber>
    </recommendedName>
    <alternativeName>
        <fullName evidence="1">IGP synthase glutaminase subunit</fullName>
        <ecNumber evidence="1">3.5.1.2</ecNumber>
    </alternativeName>
    <alternativeName>
        <fullName evidence="1">IGP synthase subunit HisH</fullName>
    </alternativeName>
    <alternativeName>
        <fullName evidence="1">ImGP synthase subunit HisH</fullName>
        <shortName evidence="1">IGPS subunit HisH</shortName>
    </alternativeName>
</protein>
<dbReference type="EC" id="4.3.2.10" evidence="1"/>
<dbReference type="EC" id="3.5.1.2" evidence="1"/>
<dbReference type="EMBL" id="CP000095">
    <property type="protein sequence ID" value="AAZ58183.1"/>
    <property type="molecule type" value="Genomic_DNA"/>
</dbReference>
<dbReference type="RefSeq" id="WP_011294781.1">
    <property type="nucleotide sequence ID" value="NC_007335.2"/>
</dbReference>
<dbReference type="SMR" id="Q46JZ5"/>
<dbReference type="STRING" id="59920.PMN2A_0692"/>
<dbReference type="KEGG" id="pmn:PMN2A_0692"/>
<dbReference type="HOGENOM" id="CLU_071837_2_2_3"/>
<dbReference type="OrthoDB" id="9807137at2"/>
<dbReference type="PhylomeDB" id="Q46JZ5"/>
<dbReference type="UniPathway" id="UPA00031">
    <property type="reaction ID" value="UER00010"/>
</dbReference>
<dbReference type="Proteomes" id="UP000002535">
    <property type="component" value="Chromosome"/>
</dbReference>
<dbReference type="GO" id="GO:0005737">
    <property type="term" value="C:cytoplasm"/>
    <property type="evidence" value="ECO:0007669"/>
    <property type="project" value="UniProtKB-SubCell"/>
</dbReference>
<dbReference type="GO" id="GO:0004359">
    <property type="term" value="F:glutaminase activity"/>
    <property type="evidence" value="ECO:0007669"/>
    <property type="project" value="UniProtKB-EC"/>
</dbReference>
<dbReference type="GO" id="GO:0000107">
    <property type="term" value="F:imidazoleglycerol-phosphate synthase activity"/>
    <property type="evidence" value="ECO:0007669"/>
    <property type="project" value="UniProtKB-UniRule"/>
</dbReference>
<dbReference type="GO" id="GO:0016829">
    <property type="term" value="F:lyase activity"/>
    <property type="evidence" value="ECO:0007669"/>
    <property type="project" value="UniProtKB-KW"/>
</dbReference>
<dbReference type="GO" id="GO:0000105">
    <property type="term" value="P:L-histidine biosynthetic process"/>
    <property type="evidence" value="ECO:0007669"/>
    <property type="project" value="UniProtKB-UniRule"/>
</dbReference>
<dbReference type="CDD" id="cd01748">
    <property type="entry name" value="GATase1_IGP_Synthase"/>
    <property type="match status" value="1"/>
</dbReference>
<dbReference type="Gene3D" id="3.40.50.880">
    <property type="match status" value="1"/>
</dbReference>
<dbReference type="HAMAP" id="MF_00278">
    <property type="entry name" value="HisH"/>
    <property type="match status" value="1"/>
</dbReference>
<dbReference type="InterPro" id="IPR029062">
    <property type="entry name" value="Class_I_gatase-like"/>
</dbReference>
<dbReference type="InterPro" id="IPR017926">
    <property type="entry name" value="GATASE"/>
</dbReference>
<dbReference type="InterPro" id="IPR010139">
    <property type="entry name" value="Imidazole-glycPsynth_HisH"/>
</dbReference>
<dbReference type="NCBIfam" id="TIGR01855">
    <property type="entry name" value="IMP_synth_hisH"/>
    <property type="match status" value="1"/>
</dbReference>
<dbReference type="PANTHER" id="PTHR42701">
    <property type="entry name" value="IMIDAZOLE GLYCEROL PHOSPHATE SYNTHASE SUBUNIT HISH"/>
    <property type="match status" value="1"/>
</dbReference>
<dbReference type="PANTHER" id="PTHR42701:SF1">
    <property type="entry name" value="IMIDAZOLE GLYCEROL PHOSPHATE SYNTHASE SUBUNIT HISH"/>
    <property type="match status" value="1"/>
</dbReference>
<dbReference type="Pfam" id="PF00117">
    <property type="entry name" value="GATase"/>
    <property type="match status" value="1"/>
</dbReference>
<dbReference type="PIRSF" id="PIRSF000495">
    <property type="entry name" value="Amidotransf_hisH"/>
    <property type="match status" value="1"/>
</dbReference>
<dbReference type="SUPFAM" id="SSF52317">
    <property type="entry name" value="Class I glutamine amidotransferase-like"/>
    <property type="match status" value="1"/>
</dbReference>
<dbReference type="PROSITE" id="PS51273">
    <property type="entry name" value="GATASE_TYPE_1"/>
    <property type="match status" value="1"/>
</dbReference>
<reference key="1">
    <citation type="journal article" date="2007" name="PLoS Genet.">
        <title>Patterns and implications of gene gain and loss in the evolution of Prochlorococcus.</title>
        <authorList>
            <person name="Kettler G.C."/>
            <person name="Martiny A.C."/>
            <person name="Huang K."/>
            <person name="Zucker J."/>
            <person name="Coleman M.L."/>
            <person name="Rodrigue S."/>
            <person name="Chen F."/>
            <person name="Lapidus A."/>
            <person name="Ferriera S."/>
            <person name="Johnson J."/>
            <person name="Steglich C."/>
            <person name="Church G.M."/>
            <person name="Richardson P."/>
            <person name="Chisholm S.W."/>
        </authorList>
    </citation>
    <scope>NUCLEOTIDE SEQUENCE [LARGE SCALE GENOMIC DNA]</scope>
    <source>
        <strain>NATL2A</strain>
    </source>
</reference>
<keyword id="KW-0028">Amino-acid biosynthesis</keyword>
<keyword id="KW-0963">Cytoplasm</keyword>
<keyword id="KW-0315">Glutamine amidotransferase</keyword>
<keyword id="KW-0368">Histidine biosynthesis</keyword>
<keyword id="KW-0378">Hydrolase</keyword>
<keyword id="KW-0456">Lyase</keyword>
<keyword id="KW-1185">Reference proteome</keyword>
<proteinExistence type="inferred from homology"/>
<evidence type="ECO:0000255" key="1">
    <source>
        <dbReference type="HAMAP-Rule" id="MF_00278"/>
    </source>
</evidence>
<comment type="function">
    <text evidence="1">IGPS catalyzes the conversion of PRFAR and glutamine to IGP, AICAR and glutamate. The HisH subunit catalyzes the hydrolysis of glutamine to glutamate and ammonia as part of the synthesis of IGP and AICAR. The resulting ammonia molecule is channeled to the active site of HisF.</text>
</comment>
<comment type="catalytic activity">
    <reaction evidence="1">
        <text>5-[(5-phospho-1-deoxy-D-ribulos-1-ylimino)methylamino]-1-(5-phospho-beta-D-ribosyl)imidazole-4-carboxamide + L-glutamine = D-erythro-1-(imidazol-4-yl)glycerol 3-phosphate + 5-amino-1-(5-phospho-beta-D-ribosyl)imidazole-4-carboxamide + L-glutamate + H(+)</text>
        <dbReference type="Rhea" id="RHEA:24793"/>
        <dbReference type="ChEBI" id="CHEBI:15378"/>
        <dbReference type="ChEBI" id="CHEBI:29985"/>
        <dbReference type="ChEBI" id="CHEBI:58278"/>
        <dbReference type="ChEBI" id="CHEBI:58359"/>
        <dbReference type="ChEBI" id="CHEBI:58475"/>
        <dbReference type="ChEBI" id="CHEBI:58525"/>
        <dbReference type="EC" id="4.3.2.10"/>
    </reaction>
</comment>
<comment type="catalytic activity">
    <reaction evidence="1">
        <text>L-glutamine + H2O = L-glutamate + NH4(+)</text>
        <dbReference type="Rhea" id="RHEA:15889"/>
        <dbReference type="ChEBI" id="CHEBI:15377"/>
        <dbReference type="ChEBI" id="CHEBI:28938"/>
        <dbReference type="ChEBI" id="CHEBI:29985"/>
        <dbReference type="ChEBI" id="CHEBI:58359"/>
        <dbReference type="EC" id="3.5.1.2"/>
    </reaction>
</comment>
<comment type="pathway">
    <text evidence="1">Amino-acid biosynthesis; L-histidine biosynthesis; L-histidine from 5-phospho-alpha-D-ribose 1-diphosphate: step 5/9.</text>
</comment>
<comment type="subunit">
    <text evidence="1">Heterodimer of HisH and HisF.</text>
</comment>
<comment type="subcellular location">
    <subcellularLocation>
        <location evidence="1">Cytoplasm</location>
    </subcellularLocation>
</comment>